<organism>
    <name type="scientific">Bdellovibrio phage phiMH2K</name>
    <name type="common">Bacteriophage phiMH2K</name>
    <dbReference type="NCBI Taxonomy" id="145579"/>
    <lineage>
        <taxon>Viruses</taxon>
        <taxon>Monodnaviria</taxon>
        <taxon>Sangervirae</taxon>
        <taxon>Phixviricota</taxon>
        <taxon>Malgrandaviricetes</taxon>
        <taxon>Petitvirales</taxon>
        <taxon>Microviridae</taxon>
        <taxon>Gokushovirinae</taxon>
        <taxon>Bdellomicrovirus</taxon>
        <taxon>Bdellomicrovirus MH2K</taxon>
    </lineage>
</organism>
<gene>
    <name type="ORF">ORFX</name>
</gene>
<reference key="1">
    <citation type="journal article" date="2002" name="J. Bacteriol.">
        <title>Microviridae, a family divided: isolation, characterization, and genome sequence of phiMH2K, a bacteriophage of the obligate intracellular parasitic bacterium Bdellovibrio bacteriovorus.</title>
        <authorList>
            <person name="Brentlinger K.L."/>
            <person name="Hafenstein S."/>
            <person name="Novak C.R."/>
            <person name="Fane B.A."/>
            <person name="Borgon R."/>
            <person name="McKenna R."/>
            <person name="Agbandje-McKenna M."/>
        </authorList>
    </citation>
    <scope>NUCLEOTIDE SEQUENCE [GENOMIC DNA]</scope>
</reference>
<keyword id="KW-1185">Reference proteome</keyword>
<accession>Q9G056</accession>
<evidence type="ECO:0000256" key="1">
    <source>
        <dbReference type="SAM" id="MobiDB-lite"/>
    </source>
</evidence>
<organismHost>
    <name type="scientific">Bdellovibrio bacteriovorus</name>
    <dbReference type="NCBI Taxonomy" id="959"/>
</organismHost>
<dbReference type="EMBL" id="AF306496">
    <property type="protein sequence ID" value="AAG45343.1"/>
    <property type="molecule type" value="Genomic_DNA"/>
</dbReference>
<dbReference type="RefSeq" id="NP_073541.1">
    <property type="nucleotide sequence ID" value="NC_002643.1"/>
</dbReference>
<dbReference type="KEGG" id="vg:918751"/>
<dbReference type="Proteomes" id="UP000002418">
    <property type="component" value="Genome"/>
</dbReference>
<protein>
    <recommendedName>
        <fullName>Uncharacterized protein X</fullName>
    </recommendedName>
</protein>
<feature type="chain" id="PRO_0000372067" description="Uncharacterized protein X">
    <location>
        <begin position="1"/>
        <end position="70"/>
    </location>
</feature>
<feature type="region of interest" description="Disordered" evidence="1">
    <location>
        <begin position="40"/>
        <end position="70"/>
    </location>
</feature>
<feature type="compositionally biased region" description="Polar residues" evidence="1">
    <location>
        <begin position="51"/>
        <end position="61"/>
    </location>
</feature>
<name>X_BPPHM</name>
<sequence>MLKFLNLTSTSLVLTSAYNVQNIYLAELLISNRIQFHKRLHQQRTAHKVTSPPSQRPQNSETKSDSQNRS</sequence>
<proteinExistence type="predicted"/>